<reference key="1">
    <citation type="journal article" date="2001" name="Nature">
        <title>Genome sequence of Yersinia pestis, the causative agent of plague.</title>
        <authorList>
            <person name="Parkhill J."/>
            <person name="Wren B.W."/>
            <person name="Thomson N.R."/>
            <person name="Titball R.W."/>
            <person name="Holden M.T.G."/>
            <person name="Prentice M.B."/>
            <person name="Sebaihia M."/>
            <person name="James K.D."/>
            <person name="Churcher C.M."/>
            <person name="Mungall K.L."/>
            <person name="Baker S."/>
            <person name="Basham D."/>
            <person name="Bentley S.D."/>
            <person name="Brooks K."/>
            <person name="Cerdeno-Tarraga A.-M."/>
            <person name="Chillingworth T."/>
            <person name="Cronin A."/>
            <person name="Davies R.M."/>
            <person name="Davis P."/>
            <person name="Dougan G."/>
            <person name="Feltwell T."/>
            <person name="Hamlin N."/>
            <person name="Holroyd S."/>
            <person name="Jagels K."/>
            <person name="Karlyshev A.V."/>
            <person name="Leather S."/>
            <person name="Moule S."/>
            <person name="Oyston P.C.F."/>
            <person name="Quail M.A."/>
            <person name="Rutherford K.M."/>
            <person name="Simmonds M."/>
            <person name="Skelton J."/>
            <person name="Stevens K."/>
            <person name="Whitehead S."/>
            <person name="Barrell B.G."/>
        </authorList>
    </citation>
    <scope>NUCLEOTIDE SEQUENCE [LARGE SCALE GENOMIC DNA]</scope>
    <source>
        <strain>CO-92 / Biovar Orientalis</strain>
    </source>
</reference>
<reference key="2">
    <citation type="journal article" date="2002" name="J. Bacteriol.">
        <title>Genome sequence of Yersinia pestis KIM.</title>
        <authorList>
            <person name="Deng W."/>
            <person name="Burland V."/>
            <person name="Plunkett G. III"/>
            <person name="Boutin A."/>
            <person name="Mayhew G.F."/>
            <person name="Liss P."/>
            <person name="Perna N.T."/>
            <person name="Rose D.J."/>
            <person name="Mau B."/>
            <person name="Zhou S."/>
            <person name="Schwartz D.C."/>
            <person name="Fetherston J.D."/>
            <person name="Lindler L.E."/>
            <person name="Brubaker R.R."/>
            <person name="Plano G.V."/>
            <person name="Straley S.C."/>
            <person name="McDonough K.A."/>
            <person name="Nilles M.L."/>
            <person name="Matson J.S."/>
            <person name="Blattner F.R."/>
            <person name="Perry R.D."/>
        </authorList>
    </citation>
    <scope>NUCLEOTIDE SEQUENCE [LARGE SCALE GENOMIC DNA]</scope>
    <source>
        <strain>KIM10+ / Biovar Mediaevalis</strain>
    </source>
</reference>
<reference key="3">
    <citation type="journal article" date="2004" name="DNA Res.">
        <title>Complete genome sequence of Yersinia pestis strain 91001, an isolate avirulent to humans.</title>
        <authorList>
            <person name="Song Y."/>
            <person name="Tong Z."/>
            <person name="Wang J."/>
            <person name="Wang L."/>
            <person name="Guo Z."/>
            <person name="Han Y."/>
            <person name="Zhang J."/>
            <person name="Pei D."/>
            <person name="Zhou D."/>
            <person name="Qin H."/>
            <person name="Pang X."/>
            <person name="Han Y."/>
            <person name="Zhai J."/>
            <person name="Li M."/>
            <person name="Cui B."/>
            <person name="Qi Z."/>
            <person name="Jin L."/>
            <person name="Dai R."/>
            <person name="Chen F."/>
            <person name="Li S."/>
            <person name="Ye C."/>
            <person name="Du Z."/>
            <person name="Lin W."/>
            <person name="Wang J."/>
            <person name="Yu J."/>
            <person name="Yang H."/>
            <person name="Wang J."/>
            <person name="Huang P."/>
            <person name="Yang R."/>
        </authorList>
    </citation>
    <scope>NUCLEOTIDE SEQUENCE [LARGE SCALE GENOMIC DNA]</scope>
    <source>
        <strain>91001 / Biovar Mediaevalis</strain>
    </source>
</reference>
<name>RECR_YERPE</name>
<feature type="chain" id="PRO_0000190432" description="Recombination protein RecR">
    <location>
        <begin position="1"/>
        <end position="201"/>
    </location>
</feature>
<feature type="domain" description="Toprim" evidence="1">
    <location>
        <begin position="81"/>
        <end position="176"/>
    </location>
</feature>
<feature type="zinc finger region" description="C4-type" evidence="1">
    <location>
        <begin position="57"/>
        <end position="72"/>
    </location>
</feature>
<protein>
    <recommendedName>
        <fullName evidence="1">Recombination protein RecR</fullName>
    </recommendedName>
</protein>
<evidence type="ECO:0000255" key="1">
    <source>
        <dbReference type="HAMAP-Rule" id="MF_00017"/>
    </source>
</evidence>
<organism>
    <name type="scientific">Yersinia pestis</name>
    <dbReference type="NCBI Taxonomy" id="632"/>
    <lineage>
        <taxon>Bacteria</taxon>
        <taxon>Pseudomonadati</taxon>
        <taxon>Pseudomonadota</taxon>
        <taxon>Gammaproteobacteria</taxon>
        <taxon>Enterobacterales</taxon>
        <taxon>Yersiniaceae</taxon>
        <taxon>Yersinia</taxon>
    </lineage>
</organism>
<comment type="function">
    <text evidence="1">May play a role in DNA repair. It seems to be involved in an RecBC-independent recombinational process of DNA repair. It may act with RecF and RecO.</text>
</comment>
<comment type="similarity">
    <text evidence="1">Belongs to the RecR family.</text>
</comment>
<sequence length="201" mass="21654">MQTSPLLESLMEALRCLPGVGPKSAQRMAFQLLQRDRSGGMRLAQALTRAMSEIGHCADCRTFTEQEHCTICLNPRRQQNGQICVVESPADIHAIEQTGQFGGRYFVLMGHLSPMDGIGPGDIGLDLLEKRLSTEAISEVILATNPTVEGDATANYIGQMCGQYGILASRIAHGVPVGGELEMVDGTTLSHSLAGRNPIKY</sequence>
<proteinExistence type="inferred from homology"/>
<gene>
    <name evidence="1" type="primary">recR</name>
    <name type="ordered locus">YPO3120</name>
    <name type="ordered locus">y1062</name>
    <name type="ordered locus">YP_0809</name>
</gene>
<accession>Q8ZC97</accession>
<accession>Q0WCG0</accession>
<dbReference type="EMBL" id="AL590842">
    <property type="protein sequence ID" value="CAL21716.1"/>
    <property type="molecule type" value="Genomic_DNA"/>
</dbReference>
<dbReference type="EMBL" id="AE009952">
    <property type="protein sequence ID" value="AAM84643.1"/>
    <property type="molecule type" value="Genomic_DNA"/>
</dbReference>
<dbReference type="EMBL" id="AE017042">
    <property type="protein sequence ID" value="AAS61074.1"/>
    <property type="molecule type" value="Genomic_DNA"/>
</dbReference>
<dbReference type="PIR" id="AI0378">
    <property type="entry name" value="AI0378"/>
</dbReference>
<dbReference type="RefSeq" id="WP_002208603.1">
    <property type="nucleotide sequence ID" value="NZ_WUCM01000009.1"/>
</dbReference>
<dbReference type="RefSeq" id="YP_002348028.1">
    <property type="nucleotide sequence ID" value="NC_003143.1"/>
</dbReference>
<dbReference type="SMR" id="Q8ZC97"/>
<dbReference type="STRING" id="214092.YPO3120"/>
<dbReference type="PaxDb" id="214092-YPO3120"/>
<dbReference type="DNASU" id="1146009"/>
<dbReference type="EnsemblBacteria" id="AAS61074">
    <property type="protein sequence ID" value="AAS61074"/>
    <property type="gene ID" value="YP_0809"/>
</dbReference>
<dbReference type="GeneID" id="57975591"/>
<dbReference type="KEGG" id="ype:YPO3120"/>
<dbReference type="KEGG" id="ypk:y1062"/>
<dbReference type="KEGG" id="ypm:YP_0809"/>
<dbReference type="PATRIC" id="fig|214092.21.peg.3576"/>
<dbReference type="eggNOG" id="COG0353">
    <property type="taxonomic scope" value="Bacteria"/>
</dbReference>
<dbReference type="HOGENOM" id="CLU_060739_1_2_6"/>
<dbReference type="OMA" id="DVMAIEN"/>
<dbReference type="OrthoDB" id="9802672at2"/>
<dbReference type="Proteomes" id="UP000000815">
    <property type="component" value="Chromosome"/>
</dbReference>
<dbReference type="Proteomes" id="UP000001019">
    <property type="component" value="Chromosome"/>
</dbReference>
<dbReference type="Proteomes" id="UP000002490">
    <property type="component" value="Chromosome"/>
</dbReference>
<dbReference type="GO" id="GO:0003677">
    <property type="term" value="F:DNA binding"/>
    <property type="evidence" value="ECO:0007669"/>
    <property type="project" value="UniProtKB-UniRule"/>
</dbReference>
<dbReference type="GO" id="GO:0008270">
    <property type="term" value="F:zinc ion binding"/>
    <property type="evidence" value="ECO:0007669"/>
    <property type="project" value="UniProtKB-KW"/>
</dbReference>
<dbReference type="GO" id="GO:0006302">
    <property type="term" value="P:double-strand break repair"/>
    <property type="evidence" value="ECO:0000318"/>
    <property type="project" value="GO_Central"/>
</dbReference>
<dbReference type="GO" id="GO:0000725">
    <property type="term" value="P:recombinational repair"/>
    <property type="evidence" value="ECO:0000318"/>
    <property type="project" value="GO_Central"/>
</dbReference>
<dbReference type="CDD" id="cd01025">
    <property type="entry name" value="TOPRIM_recR"/>
    <property type="match status" value="1"/>
</dbReference>
<dbReference type="FunFam" id="1.10.8.420:FF:000001">
    <property type="entry name" value="Recombination protein RecR"/>
    <property type="match status" value="1"/>
</dbReference>
<dbReference type="FunFam" id="3.40.1360.10:FF:000001">
    <property type="entry name" value="Recombination protein RecR"/>
    <property type="match status" value="1"/>
</dbReference>
<dbReference type="Gene3D" id="3.40.1360.10">
    <property type="match status" value="1"/>
</dbReference>
<dbReference type="Gene3D" id="6.10.250.240">
    <property type="match status" value="1"/>
</dbReference>
<dbReference type="Gene3D" id="1.10.8.420">
    <property type="entry name" value="RecR Domain 1"/>
    <property type="match status" value="1"/>
</dbReference>
<dbReference type="HAMAP" id="MF_00017">
    <property type="entry name" value="RecR"/>
    <property type="match status" value="1"/>
</dbReference>
<dbReference type="InterPro" id="IPR000093">
    <property type="entry name" value="DNA_Rcmb_RecR"/>
</dbReference>
<dbReference type="InterPro" id="IPR023627">
    <property type="entry name" value="Rcmb_RecR"/>
</dbReference>
<dbReference type="InterPro" id="IPR015967">
    <property type="entry name" value="Rcmb_RecR_Znf"/>
</dbReference>
<dbReference type="InterPro" id="IPR006171">
    <property type="entry name" value="TOPRIM_dom"/>
</dbReference>
<dbReference type="InterPro" id="IPR034137">
    <property type="entry name" value="TOPRIM_RecR"/>
</dbReference>
<dbReference type="NCBIfam" id="TIGR00615">
    <property type="entry name" value="recR"/>
    <property type="match status" value="1"/>
</dbReference>
<dbReference type="PANTHER" id="PTHR30446">
    <property type="entry name" value="RECOMBINATION PROTEIN RECR"/>
    <property type="match status" value="1"/>
</dbReference>
<dbReference type="PANTHER" id="PTHR30446:SF0">
    <property type="entry name" value="RECOMBINATION PROTEIN RECR"/>
    <property type="match status" value="1"/>
</dbReference>
<dbReference type="Pfam" id="PF21175">
    <property type="entry name" value="RecR_C"/>
    <property type="match status" value="1"/>
</dbReference>
<dbReference type="Pfam" id="PF21176">
    <property type="entry name" value="RecR_HhH"/>
    <property type="match status" value="1"/>
</dbReference>
<dbReference type="Pfam" id="PF02132">
    <property type="entry name" value="RecR_ZnF"/>
    <property type="match status" value="1"/>
</dbReference>
<dbReference type="Pfam" id="PF13662">
    <property type="entry name" value="Toprim_4"/>
    <property type="match status" value="1"/>
</dbReference>
<dbReference type="SMART" id="SM00493">
    <property type="entry name" value="TOPRIM"/>
    <property type="match status" value="1"/>
</dbReference>
<dbReference type="SUPFAM" id="SSF111304">
    <property type="entry name" value="Recombination protein RecR"/>
    <property type="match status" value="1"/>
</dbReference>
<dbReference type="PROSITE" id="PS01300">
    <property type="entry name" value="RECR"/>
    <property type="match status" value="1"/>
</dbReference>
<dbReference type="PROSITE" id="PS50880">
    <property type="entry name" value="TOPRIM"/>
    <property type="match status" value="1"/>
</dbReference>
<keyword id="KW-0227">DNA damage</keyword>
<keyword id="KW-0233">DNA recombination</keyword>
<keyword id="KW-0234">DNA repair</keyword>
<keyword id="KW-0479">Metal-binding</keyword>
<keyword id="KW-1185">Reference proteome</keyword>
<keyword id="KW-0862">Zinc</keyword>
<keyword id="KW-0863">Zinc-finger</keyword>